<name>RIMP_LEGPA</name>
<dbReference type="EMBL" id="CR628336">
    <property type="protein sequence ID" value="CAH13975.1"/>
    <property type="status" value="ALT_INIT"/>
    <property type="molecule type" value="Genomic_DNA"/>
</dbReference>
<dbReference type="RefSeq" id="WP_010948464.1">
    <property type="nucleotide sequence ID" value="NC_006368.1"/>
</dbReference>
<dbReference type="SMR" id="Q5X1C1"/>
<dbReference type="GeneID" id="57036772"/>
<dbReference type="KEGG" id="lpp:lpp2822"/>
<dbReference type="LegioList" id="lpp2822"/>
<dbReference type="HOGENOM" id="CLU_070525_1_1_6"/>
<dbReference type="GO" id="GO:0005829">
    <property type="term" value="C:cytosol"/>
    <property type="evidence" value="ECO:0007669"/>
    <property type="project" value="TreeGrafter"/>
</dbReference>
<dbReference type="GO" id="GO:0000028">
    <property type="term" value="P:ribosomal small subunit assembly"/>
    <property type="evidence" value="ECO:0007669"/>
    <property type="project" value="TreeGrafter"/>
</dbReference>
<dbReference type="GO" id="GO:0006412">
    <property type="term" value="P:translation"/>
    <property type="evidence" value="ECO:0007669"/>
    <property type="project" value="TreeGrafter"/>
</dbReference>
<dbReference type="CDD" id="cd01734">
    <property type="entry name" value="YlxS_C"/>
    <property type="match status" value="1"/>
</dbReference>
<dbReference type="FunFam" id="3.30.300.70:FF:000001">
    <property type="entry name" value="Ribosome maturation factor RimP"/>
    <property type="match status" value="1"/>
</dbReference>
<dbReference type="Gene3D" id="2.30.30.180">
    <property type="entry name" value="Ribosome maturation factor RimP, C-terminal domain"/>
    <property type="match status" value="1"/>
</dbReference>
<dbReference type="Gene3D" id="3.30.300.70">
    <property type="entry name" value="RimP-like superfamily, N-terminal"/>
    <property type="match status" value="1"/>
</dbReference>
<dbReference type="HAMAP" id="MF_01077">
    <property type="entry name" value="RimP"/>
    <property type="match status" value="1"/>
</dbReference>
<dbReference type="InterPro" id="IPR003728">
    <property type="entry name" value="Ribosome_maturation_RimP"/>
</dbReference>
<dbReference type="InterPro" id="IPR028998">
    <property type="entry name" value="RimP_C"/>
</dbReference>
<dbReference type="InterPro" id="IPR036847">
    <property type="entry name" value="RimP_C_sf"/>
</dbReference>
<dbReference type="InterPro" id="IPR028989">
    <property type="entry name" value="RimP_N"/>
</dbReference>
<dbReference type="InterPro" id="IPR035956">
    <property type="entry name" value="RimP_N_sf"/>
</dbReference>
<dbReference type="NCBIfam" id="NF000927">
    <property type="entry name" value="PRK00092.1-1"/>
    <property type="match status" value="1"/>
</dbReference>
<dbReference type="PANTHER" id="PTHR33867">
    <property type="entry name" value="RIBOSOME MATURATION FACTOR RIMP"/>
    <property type="match status" value="1"/>
</dbReference>
<dbReference type="PANTHER" id="PTHR33867:SF1">
    <property type="entry name" value="RIBOSOME MATURATION FACTOR RIMP"/>
    <property type="match status" value="1"/>
</dbReference>
<dbReference type="Pfam" id="PF17384">
    <property type="entry name" value="DUF150_C"/>
    <property type="match status" value="1"/>
</dbReference>
<dbReference type="Pfam" id="PF02576">
    <property type="entry name" value="RimP_N"/>
    <property type="match status" value="1"/>
</dbReference>
<dbReference type="SUPFAM" id="SSF74942">
    <property type="entry name" value="YhbC-like, C-terminal domain"/>
    <property type="match status" value="1"/>
</dbReference>
<dbReference type="SUPFAM" id="SSF75420">
    <property type="entry name" value="YhbC-like, N-terminal domain"/>
    <property type="match status" value="1"/>
</dbReference>
<reference key="1">
    <citation type="journal article" date="2004" name="Nat. Genet.">
        <title>Evidence in the Legionella pneumophila genome for exploitation of host cell functions and high genome plasticity.</title>
        <authorList>
            <person name="Cazalet C."/>
            <person name="Rusniok C."/>
            <person name="Brueggemann H."/>
            <person name="Zidane N."/>
            <person name="Magnier A."/>
            <person name="Ma L."/>
            <person name="Tichit M."/>
            <person name="Jarraud S."/>
            <person name="Bouchier C."/>
            <person name="Vandenesch F."/>
            <person name="Kunst F."/>
            <person name="Etienne J."/>
            <person name="Glaser P."/>
            <person name="Buchrieser C."/>
        </authorList>
    </citation>
    <scope>NUCLEOTIDE SEQUENCE [LARGE SCALE GENOMIC DNA]</scope>
    <source>
        <strain>Paris</strain>
    </source>
</reference>
<feature type="chain" id="PRO_0000229247" description="Ribosome maturation factor RimP">
    <location>
        <begin position="1"/>
        <end position="147"/>
    </location>
</feature>
<proteinExistence type="inferred from homology"/>
<evidence type="ECO:0000255" key="1">
    <source>
        <dbReference type="HAMAP-Rule" id="MF_01077"/>
    </source>
</evidence>
<evidence type="ECO:0000305" key="2"/>
<accession>Q5X1C1</accession>
<keyword id="KW-0963">Cytoplasm</keyword>
<keyword id="KW-0690">Ribosome biogenesis</keyword>
<sequence>MINDDLIVLLEPIIKNMGYELWGCEYLSQGKHSLLRIYIDKPDGIGIDDCQEVSKQVSAMLDVEDPIPGHYSLEISSPGIPRPLFSIWQYQRYLGYEIHVKTFKPVNGKRKLSGIIVSASEDTIVLDINNEHQEILLSNIVKANLTV</sequence>
<organism>
    <name type="scientific">Legionella pneumophila (strain Paris)</name>
    <dbReference type="NCBI Taxonomy" id="297246"/>
    <lineage>
        <taxon>Bacteria</taxon>
        <taxon>Pseudomonadati</taxon>
        <taxon>Pseudomonadota</taxon>
        <taxon>Gammaproteobacteria</taxon>
        <taxon>Legionellales</taxon>
        <taxon>Legionellaceae</taxon>
        <taxon>Legionella</taxon>
    </lineage>
</organism>
<comment type="function">
    <text evidence="1">Required for maturation of 30S ribosomal subunits.</text>
</comment>
<comment type="subcellular location">
    <subcellularLocation>
        <location evidence="1">Cytoplasm</location>
    </subcellularLocation>
</comment>
<comment type="similarity">
    <text evidence="1">Belongs to the RimP family.</text>
</comment>
<comment type="sequence caution" evidence="2">
    <conflict type="erroneous initiation">
        <sequence resource="EMBL-CDS" id="CAH13975"/>
    </conflict>
</comment>
<gene>
    <name evidence="1" type="primary">rimP</name>
    <name type="ordered locus">lpp2822</name>
</gene>
<protein>
    <recommendedName>
        <fullName evidence="1">Ribosome maturation factor RimP</fullName>
    </recommendedName>
</protein>